<keyword id="KW-0324">Glycolysis</keyword>
<keyword id="KW-0413">Isomerase</keyword>
<keyword id="KW-0464">Manganese</keyword>
<keyword id="KW-0479">Metal-binding</keyword>
<name>GPMI_FRATN</name>
<dbReference type="EC" id="5.4.2.12" evidence="1"/>
<dbReference type="EMBL" id="CP000439">
    <property type="protein sequence ID" value="ABK89541.1"/>
    <property type="molecule type" value="Genomic_DNA"/>
</dbReference>
<dbReference type="RefSeq" id="WP_003038742.1">
    <property type="nucleotide sequence ID" value="NZ_CP009633.1"/>
</dbReference>
<dbReference type="SMR" id="A0Q5M6"/>
<dbReference type="KEGG" id="ftn:FTN_0648"/>
<dbReference type="KEGG" id="ftx:AW25_1377"/>
<dbReference type="BioCyc" id="FTUL401614:G1G75-674-MONOMER"/>
<dbReference type="UniPathway" id="UPA00109">
    <property type="reaction ID" value="UER00186"/>
</dbReference>
<dbReference type="Proteomes" id="UP000000762">
    <property type="component" value="Chromosome"/>
</dbReference>
<dbReference type="GO" id="GO:0005829">
    <property type="term" value="C:cytosol"/>
    <property type="evidence" value="ECO:0007669"/>
    <property type="project" value="TreeGrafter"/>
</dbReference>
<dbReference type="GO" id="GO:0030145">
    <property type="term" value="F:manganese ion binding"/>
    <property type="evidence" value="ECO:0007669"/>
    <property type="project" value="UniProtKB-UniRule"/>
</dbReference>
<dbReference type="GO" id="GO:0004619">
    <property type="term" value="F:phosphoglycerate mutase activity"/>
    <property type="evidence" value="ECO:0007669"/>
    <property type="project" value="UniProtKB-EC"/>
</dbReference>
<dbReference type="GO" id="GO:0006007">
    <property type="term" value="P:glucose catabolic process"/>
    <property type="evidence" value="ECO:0007669"/>
    <property type="project" value="InterPro"/>
</dbReference>
<dbReference type="GO" id="GO:0006096">
    <property type="term" value="P:glycolytic process"/>
    <property type="evidence" value="ECO:0007669"/>
    <property type="project" value="UniProtKB-UniRule"/>
</dbReference>
<dbReference type="CDD" id="cd16010">
    <property type="entry name" value="iPGM"/>
    <property type="match status" value="1"/>
</dbReference>
<dbReference type="FunFam" id="3.40.1450.10:FF:000001">
    <property type="entry name" value="2,3-bisphosphoglycerate-independent phosphoglycerate mutase"/>
    <property type="match status" value="1"/>
</dbReference>
<dbReference type="FunFam" id="3.40.720.10:FF:000001">
    <property type="entry name" value="2,3-bisphosphoglycerate-independent phosphoglycerate mutase"/>
    <property type="match status" value="1"/>
</dbReference>
<dbReference type="Gene3D" id="3.40.720.10">
    <property type="entry name" value="Alkaline Phosphatase, subunit A"/>
    <property type="match status" value="1"/>
</dbReference>
<dbReference type="Gene3D" id="3.40.1450.10">
    <property type="entry name" value="BPG-independent phosphoglycerate mutase, domain B"/>
    <property type="match status" value="1"/>
</dbReference>
<dbReference type="HAMAP" id="MF_01038">
    <property type="entry name" value="GpmI"/>
    <property type="match status" value="1"/>
</dbReference>
<dbReference type="InterPro" id="IPR017850">
    <property type="entry name" value="Alkaline_phosphatase_core_sf"/>
</dbReference>
<dbReference type="InterPro" id="IPR011258">
    <property type="entry name" value="BPG-indep_PGM_N"/>
</dbReference>
<dbReference type="InterPro" id="IPR006124">
    <property type="entry name" value="Metalloenzyme"/>
</dbReference>
<dbReference type="InterPro" id="IPR036646">
    <property type="entry name" value="PGAM_B_sf"/>
</dbReference>
<dbReference type="InterPro" id="IPR005995">
    <property type="entry name" value="Pgm_bpd_ind"/>
</dbReference>
<dbReference type="NCBIfam" id="TIGR01307">
    <property type="entry name" value="pgm_bpd_ind"/>
    <property type="match status" value="1"/>
</dbReference>
<dbReference type="PANTHER" id="PTHR31637">
    <property type="entry name" value="2,3-BISPHOSPHOGLYCERATE-INDEPENDENT PHOSPHOGLYCERATE MUTASE"/>
    <property type="match status" value="1"/>
</dbReference>
<dbReference type="PANTHER" id="PTHR31637:SF0">
    <property type="entry name" value="2,3-BISPHOSPHOGLYCERATE-INDEPENDENT PHOSPHOGLYCERATE MUTASE"/>
    <property type="match status" value="1"/>
</dbReference>
<dbReference type="Pfam" id="PF06415">
    <property type="entry name" value="iPGM_N"/>
    <property type="match status" value="1"/>
</dbReference>
<dbReference type="Pfam" id="PF01676">
    <property type="entry name" value="Metalloenzyme"/>
    <property type="match status" value="1"/>
</dbReference>
<dbReference type="PIRSF" id="PIRSF001492">
    <property type="entry name" value="IPGAM"/>
    <property type="match status" value="1"/>
</dbReference>
<dbReference type="SUPFAM" id="SSF64158">
    <property type="entry name" value="2,3-Bisphosphoglycerate-independent phosphoglycerate mutase, substrate-binding domain"/>
    <property type="match status" value="1"/>
</dbReference>
<dbReference type="SUPFAM" id="SSF53649">
    <property type="entry name" value="Alkaline phosphatase-like"/>
    <property type="match status" value="1"/>
</dbReference>
<gene>
    <name evidence="1" type="primary">gpmI</name>
    <name type="ordered locus">FTN_0648</name>
</gene>
<proteinExistence type="inferred from homology"/>
<comment type="function">
    <text evidence="1">Catalyzes the interconversion of 2-phosphoglycerate and 3-phosphoglycerate.</text>
</comment>
<comment type="catalytic activity">
    <reaction evidence="1">
        <text>(2R)-2-phosphoglycerate = (2R)-3-phosphoglycerate</text>
        <dbReference type="Rhea" id="RHEA:15901"/>
        <dbReference type="ChEBI" id="CHEBI:58272"/>
        <dbReference type="ChEBI" id="CHEBI:58289"/>
        <dbReference type="EC" id="5.4.2.12"/>
    </reaction>
</comment>
<comment type="cofactor">
    <cofactor evidence="1">
        <name>Mn(2+)</name>
        <dbReference type="ChEBI" id="CHEBI:29035"/>
    </cofactor>
    <text evidence="1">Binds 2 manganese ions per subunit.</text>
</comment>
<comment type="pathway">
    <text evidence="1">Carbohydrate degradation; glycolysis; pyruvate from D-glyceraldehyde 3-phosphate: step 3/5.</text>
</comment>
<comment type="subunit">
    <text evidence="1">Monomer.</text>
</comment>
<comment type="similarity">
    <text evidence="1">Belongs to the BPG-independent phosphoglycerate mutase family.</text>
</comment>
<accession>A0Q5M6</accession>
<feature type="chain" id="PRO_1000063971" description="2,3-bisphosphoglycerate-independent phosphoglycerate mutase">
    <location>
        <begin position="1"/>
        <end position="512"/>
    </location>
</feature>
<feature type="active site" description="Phosphoserine intermediate" evidence="1">
    <location>
        <position position="61"/>
    </location>
</feature>
<feature type="binding site" evidence="1">
    <location>
        <position position="11"/>
    </location>
    <ligand>
        <name>Mn(2+)</name>
        <dbReference type="ChEBI" id="CHEBI:29035"/>
        <label>2</label>
    </ligand>
</feature>
<feature type="binding site" evidence="1">
    <location>
        <position position="61"/>
    </location>
    <ligand>
        <name>Mn(2+)</name>
        <dbReference type="ChEBI" id="CHEBI:29035"/>
        <label>2</label>
    </ligand>
</feature>
<feature type="binding site" evidence="1">
    <location>
        <position position="122"/>
    </location>
    <ligand>
        <name>substrate</name>
    </ligand>
</feature>
<feature type="binding site" evidence="1">
    <location>
        <begin position="152"/>
        <end position="153"/>
    </location>
    <ligand>
        <name>substrate</name>
    </ligand>
</feature>
<feature type="binding site" evidence="1">
    <location>
        <position position="184"/>
    </location>
    <ligand>
        <name>substrate</name>
    </ligand>
</feature>
<feature type="binding site" evidence="1">
    <location>
        <position position="190"/>
    </location>
    <ligand>
        <name>substrate</name>
    </ligand>
</feature>
<feature type="binding site" evidence="1">
    <location>
        <begin position="259"/>
        <end position="262"/>
    </location>
    <ligand>
        <name>substrate</name>
    </ligand>
</feature>
<feature type="binding site" evidence="1">
    <location>
        <position position="332"/>
    </location>
    <ligand>
        <name>substrate</name>
    </ligand>
</feature>
<feature type="binding site" evidence="1">
    <location>
        <position position="399"/>
    </location>
    <ligand>
        <name>Mn(2+)</name>
        <dbReference type="ChEBI" id="CHEBI:29035"/>
        <label>1</label>
    </ligand>
</feature>
<feature type="binding site" evidence="1">
    <location>
        <position position="403"/>
    </location>
    <ligand>
        <name>Mn(2+)</name>
        <dbReference type="ChEBI" id="CHEBI:29035"/>
        <label>1</label>
    </ligand>
</feature>
<feature type="binding site" evidence="1">
    <location>
        <position position="440"/>
    </location>
    <ligand>
        <name>Mn(2+)</name>
        <dbReference type="ChEBI" id="CHEBI:29035"/>
        <label>2</label>
    </ligand>
</feature>
<feature type="binding site" evidence="1">
    <location>
        <position position="441"/>
    </location>
    <ligand>
        <name>Mn(2+)</name>
        <dbReference type="ChEBI" id="CHEBI:29035"/>
        <label>2</label>
    </ligand>
</feature>
<feature type="binding site" evidence="1">
    <location>
        <position position="459"/>
    </location>
    <ligand>
        <name>Mn(2+)</name>
        <dbReference type="ChEBI" id="CHEBI:29035"/>
        <label>1</label>
    </ligand>
</feature>
<protein>
    <recommendedName>
        <fullName evidence="1">2,3-bisphosphoglycerate-independent phosphoglycerate mutase</fullName>
        <shortName evidence="1">BPG-independent PGAM</shortName>
        <shortName evidence="1">Phosphoglyceromutase</shortName>
        <shortName evidence="1">iPGM</shortName>
        <ecNumber evidence="1">5.4.2.12</ecNumber>
    </recommendedName>
</protein>
<reference key="1">
    <citation type="journal article" date="2007" name="Genome Biol.">
        <title>Comparison of Francisella tularensis genomes reveals evolutionary events associated with the emergence of human pathogenic strains.</title>
        <authorList>
            <person name="Rohmer L."/>
            <person name="Fong C."/>
            <person name="Abmayr S."/>
            <person name="Wasnick M."/>
            <person name="Larson Freeman T.J."/>
            <person name="Radey M."/>
            <person name="Guina T."/>
            <person name="Svensson K."/>
            <person name="Hayden H.S."/>
            <person name="Jacobs M."/>
            <person name="Gallagher L.A."/>
            <person name="Manoil C."/>
            <person name="Ernst R.K."/>
            <person name="Drees B."/>
            <person name="Buckley D."/>
            <person name="Haugen E."/>
            <person name="Bovee D."/>
            <person name="Zhou Y."/>
            <person name="Chang J."/>
            <person name="Levy R."/>
            <person name="Lim R."/>
            <person name="Gillett W."/>
            <person name="Guenthener D."/>
            <person name="Kang A."/>
            <person name="Shaffer S.A."/>
            <person name="Taylor G."/>
            <person name="Chen J."/>
            <person name="Gallis B."/>
            <person name="D'Argenio D.A."/>
            <person name="Forsman M."/>
            <person name="Olson M.V."/>
            <person name="Goodlett D.R."/>
            <person name="Kaul R."/>
            <person name="Miller S.I."/>
            <person name="Brittnacher M.J."/>
        </authorList>
    </citation>
    <scope>NUCLEOTIDE SEQUENCE [LARGE SCALE GENOMIC DNA]</scope>
    <source>
        <strain>U112</strain>
    </source>
</reference>
<organism>
    <name type="scientific">Francisella tularensis subsp. novicida (strain U112)</name>
    <dbReference type="NCBI Taxonomy" id="401614"/>
    <lineage>
        <taxon>Bacteria</taxon>
        <taxon>Pseudomonadati</taxon>
        <taxon>Pseudomonadota</taxon>
        <taxon>Gammaproteobacteria</taxon>
        <taxon>Thiotrichales</taxon>
        <taxon>Francisellaceae</taxon>
        <taxon>Francisella</taxon>
    </lineage>
</organism>
<evidence type="ECO:0000255" key="1">
    <source>
        <dbReference type="HAMAP-Rule" id="MF_01038"/>
    </source>
</evidence>
<sequence length="512" mass="57537">MKKTTLLVILDGWGYSDSDYFNAIKNANTPTWDSIWQEFPKTLINASSLEVGLPRGQMGNSEVGHVNIGCGRVVYQELTKIDKAIEEKTFGDNKAIGAAIDNVIKNDSNLHLIGLLSPGGVHSHEEHIFEMIKIAKQKGIKRLYLHAFLDGRDTPPRSAEKSIKKADKLLQDLNLGYIASVCGRYYAMDRDNRWDRVEKAYNAIVNANADFIYDSALEALEQSYARDQSDEFVIPTCIKKDGHLVKVQDNDSVIFMNFRADRAREISHAFTDESFDHFPRKKHLNINFTTLTEYDSKLKCAVAFPPEQPINTLGEVLMKNHKTQLRIAETEKYPHVTFFFNGGREEQFEGEDRILIPSPKVATYDLQPEMSAPEVTDKLVAAINSGKYDCIVCNYANSDMVGHTGNYEAAMQAIEYLDKCIARLKDAILEHDGNMFITADHGNADMMVNPETQKPHTAHTTNLVPFVYVGHKKAQVALEHGKLSDIAPTLLNVMGIAQPKEMTGKTIFNFEK</sequence>